<reference evidence="10" key="1">
    <citation type="submission" date="2013-04" db="EMBL/GenBank/DDBJ databases">
        <authorList>
            <person name="Sibley D."/>
            <person name="Venepally P."/>
            <person name="Karamycheva S."/>
            <person name="Hadjithomas M."/>
            <person name="Khan A."/>
            <person name="Brunk B."/>
            <person name="Roos D."/>
            <person name="Caler E."/>
            <person name="Lorenzi H."/>
        </authorList>
    </citation>
    <scope>NUCLEOTIDE SEQUENCE [LARGE SCALE GENOMIC DNA]</scope>
    <source>
        <strain evidence="10">ATCC 50611 / Me49</strain>
    </source>
</reference>
<reference evidence="8" key="2">
    <citation type="journal article" date="2018" name="J. Biol. Chem.">
        <title>The intracellular parasite Toxoplasma gondii harbors three druggable FNT-type formate and l-lactate transporters in the plasma membrane.</title>
        <authorList>
            <person name="Erler H."/>
            <person name="Ren B."/>
            <person name="Gupta N."/>
            <person name="Beitz E."/>
        </authorList>
    </citation>
    <scope>FUNCTION</scope>
    <scope>TRANSPORTER ACTIVITY</scope>
    <scope>ACTIVITY REGULATION</scope>
    <scope>SUBCELLULAR LOCATION</scope>
    <scope>TOPOLOGY</scope>
    <scope>MUTAGENESIS OF GLY-93</scope>
</reference>
<reference evidence="8" key="3">
    <citation type="journal article" date="2021" name="Sci. Rep.">
        <title>Identifying the major lactate transporter of Toxoplasma gondii tachyzoites.</title>
        <authorList>
            <person name="Zeng J.M."/>
            <person name="Hapuarachchi S.V."/>
            <person name="Shafik S.H."/>
            <person name="Martin R.E."/>
            <person name="Kirk K."/>
            <person name="van Dooren G.G."/>
            <person name="Lehane A.M."/>
        </authorList>
    </citation>
    <scope>SUBCELLULAR LOCATION</scope>
</reference>
<organism evidence="10">
    <name type="scientific">Toxoplasma gondii (strain ATCC 50611 / Me49)</name>
    <dbReference type="NCBI Taxonomy" id="508771"/>
    <lineage>
        <taxon>Eukaryota</taxon>
        <taxon>Sar</taxon>
        <taxon>Alveolata</taxon>
        <taxon>Apicomplexa</taxon>
        <taxon>Conoidasida</taxon>
        <taxon>Coccidia</taxon>
        <taxon>Eucoccidiorida</taxon>
        <taxon>Eimeriorina</taxon>
        <taxon>Sarcocystidae</taxon>
        <taxon>Toxoplasma</taxon>
    </lineage>
</organism>
<sequence>MVLAASPEAYRKVIEYGIKKTKLRIDRLFLQAIMAGIYVGMAGHACTALAGAYSTDPANPLAVSKATQKFLYASLFPVAFIAIIFTGAELFTGNTMTMLVCLLERRVTALQLCINWICSLVGNWAGALFAAYFLSYLPGVLQDPDHLHYLEDVAAHKTELSFLQCFCLAVGCNTFVCLAVWFVIASDDAAGKIMSMWFPIVSFCVAGYEHIIANFYTLQCALMHGVGPGVGTVILKNFIPTLLGNIVGGCGLVGAVYWYNFYPTVCVVQEARQPLPLSENAPSSTRQVVADLFSLWGRESSTPGVSASPPDAATNAGCSALDPPRNALLAAGKNFGNLSAGDRGALAEGIPGGACEDCLLVPRASFGGEYHPPQQGDAGRWCKPSKAAVGSGGVLCHVQSPAALEAVSNSPLRENSGVPSGGLLLCEGRVRRSSREREPERGGEEEGASPEEDHPAVTLSIPPTDFHPHVPREVEQSSLLEETRVAAENSALEEHPASTI</sequence>
<accession>S8GBB9</accession>
<accession>A0A0N5EBT8</accession>
<accession>V4ZK89</accession>
<dbReference type="EMBL" id="KE138831">
    <property type="protein sequence ID" value="EPT29115.1"/>
    <property type="molecule type" value="Genomic_DNA"/>
</dbReference>
<dbReference type="RefSeq" id="XP_018636916.1">
    <property type="nucleotide sequence ID" value="XM_018780226.1"/>
</dbReference>
<dbReference type="SMR" id="S8GBB9"/>
<dbReference type="EnsemblProtists" id="TGME49_229170-t26_1">
    <property type="protein sequence ID" value="TGME49_229170-t26_1"/>
    <property type="gene ID" value="TGME49_229170"/>
</dbReference>
<dbReference type="GeneID" id="7899820"/>
<dbReference type="KEGG" id="tgo:TGME49_229170"/>
<dbReference type="VEuPathDB" id="ToxoDB:TGME49_229170"/>
<dbReference type="OrthoDB" id="4829at2759"/>
<dbReference type="PhylomeDB" id="S8GBB9"/>
<dbReference type="Proteomes" id="UP000001529">
    <property type="component" value="Chromosome VIII"/>
</dbReference>
<dbReference type="GO" id="GO:0005886">
    <property type="term" value="C:plasma membrane"/>
    <property type="evidence" value="ECO:0007669"/>
    <property type="project" value="UniProtKB-SubCell"/>
</dbReference>
<dbReference type="GO" id="GO:0015513">
    <property type="term" value="F:high-affinity secondary active nitrite transmembrane transporter activity"/>
    <property type="evidence" value="ECO:0007669"/>
    <property type="project" value="TreeGrafter"/>
</dbReference>
<dbReference type="GO" id="GO:0015707">
    <property type="term" value="P:nitrite transport"/>
    <property type="evidence" value="ECO:0007669"/>
    <property type="project" value="TreeGrafter"/>
</dbReference>
<dbReference type="Gene3D" id="1.20.1080.10">
    <property type="entry name" value="Glycerol uptake facilitator protein"/>
    <property type="match status" value="1"/>
</dbReference>
<dbReference type="InterPro" id="IPR023271">
    <property type="entry name" value="Aquaporin-like"/>
</dbReference>
<dbReference type="InterPro" id="IPR000292">
    <property type="entry name" value="For/NO2_transpt"/>
</dbReference>
<dbReference type="PANTHER" id="PTHR30520">
    <property type="entry name" value="FORMATE TRANSPORTER-RELATED"/>
    <property type="match status" value="1"/>
</dbReference>
<dbReference type="PANTHER" id="PTHR30520:SF6">
    <property type="entry name" value="FORMATE_NITRATE FAMILY TRANSPORTER (EUROFUNG)"/>
    <property type="match status" value="1"/>
</dbReference>
<dbReference type="Pfam" id="PF01226">
    <property type="entry name" value="Form_Nir_trans"/>
    <property type="match status" value="1"/>
</dbReference>
<gene>
    <name evidence="9" type="ORF">TGME49_229170</name>
</gene>
<comment type="function">
    <text evidence="4">Monocarboxylate-proton symporter; active in acidic-to-neutral pH range (PubMed:30237165). Transports L-lactate and formate (PubMed:30237165).</text>
</comment>
<comment type="catalytic activity">
    <reaction evidence="4">
        <text>(S)-lactate(in) + H(+)(in) = (S)-lactate(out) + H(+)(out)</text>
        <dbReference type="Rhea" id="RHEA:29415"/>
        <dbReference type="ChEBI" id="CHEBI:15378"/>
        <dbReference type="ChEBI" id="CHEBI:16651"/>
    </reaction>
</comment>
<comment type="catalytic activity">
    <reaction evidence="4">
        <text>formate(in) + H(+)(in) = formate(out) + H(+)(out)</text>
        <dbReference type="Rhea" id="RHEA:80887"/>
        <dbReference type="ChEBI" id="CHEBI:15378"/>
        <dbReference type="ChEBI" id="CHEBI:15740"/>
    </reaction>
</comment>
<comment type="catalytic activity">
    <reaction evidence="1">
        <text>pyruvate(out) + H(+)(out) = pyruvate(in) + H(+)(in)</text>
        <dbReference type="Rhea" id="RHEA:64720"/>
        <dbReference type="ChEBI" id="CHEBI:15361"/>
        <dbReference type="ChEBI" id="CHEBI:15378"/>
    </reaction>
</comment>
<comment type="catalytic activity">
    <reaction evidence="1">
        <text>acetate(out) + H(+)(out) = acetate(in) + H(+)(in)</text>
        <dbReference type="Rhea" id="RHEA:71803"/>
        <dbReference type="ChEBI" id="CHEBI:15378"/>
        <dbReference type="ChEBI" id="CHEBI:30089"/>
    </reaction>
</comment>
<comment type="activity regulation">
    <text evidence="4">Inhibited by p-chloromercuribenzene sulfonate (pCMBS) (PubMed:30237165). Methyl methanethiosulfonate (MMTS) inhibits L-lactate but not formate transport (PubMed:30237165). Inhibited by the Malaria Box compound MMV007839 (PubMed:30237165). Inhibited by BH-296, BH-317, BH-326 and BH-388 compounds (PubMed:30237165).</text>
</comment>
<comment type="subunit">
    <text evidence="1">Homopentamer.</text>
</comment>
<comment type="subcellular location">
    <subcellularLocation>
        <location evidence="4 5">Cell membrane</location>
        <topology evidence="2">Multi-pass membrane protein</topology>
    </subcellularLocation>
</comment>
<comment type="miscellaneous">
    <text evidence="4 5">Inhibitors modestly slow the asexual reproduction of parasites (PubMed:30237165). Frameshift mutations that are likely to render the resulting proteins non-functional, have no significant effects on tachyzoite proliferation in vitro (PubMed:33762657).</text>
</comment>
<comment type="similarity">
    <text evidence="8">Belongs to the FNT transporter (TC 1.A.16) family.</text>
</comment>
<keyword id="KW-1003">Cell membrane</keyword>
<keyword id="KW-0472">Membrane</keyword>
<keyword id="KW-1185">Reference proteome</keyword>
<keyword id="KW-0812">Transmembrane</keyword>
<keyword id="KW-1133">Transmembrane helix</keyword>
<protein>
    <recommendedName>
        <fullName evidence="6 7">Formate-nitrite transporter 3</fullName>
        <shortName evidence="6 7">TgFNT3</shortName>
    </recommendedName>
</protein>
<proteinExistence type="evidence at protein level"/>
<feature type="chain" id="PRO_0000461326" description="Formate-nitrite transporter 3">
    <location>
        <begin position="1"/>
        <end position="500"/>
    </location>
</feature>
<feature type="topological domain" description="Cytoplasmic" evidence="8">
    <location>
        <begin position="1"/>
        <end position="31"/>
    </location>
</feature>
<feature type="transmembrane region" description="Helical" evidence="2">
    <location>
        <begin position="32"/>
        <end position="52"/>
    </location>
</feature>
<feature type="topological domain" description="Extracellular" evidence="8">
    <location>
        <begin position="53"/>
        <end position="69"/>
    </location>
</feature>
<feature type="transmembrane region" description="Helical" evidence="2">
    <location>
        <begin position="70"/>
        <end position="90"/>
    </location>
</feature>
<feature type="topological domain" description="Cytoplasmic" evidence="8">
    <location>
        <begin position="91"/>
        <end position="113"/>
    </location>
</feature>
<feature type="transmembrane region" description="Helical" evidence="2">
    <location>
        <begin position="114"/>
        <end position="134"/>
    </location>
</feature>
<feature type="topological domain" description="Extracellular" evidence="8">
    <location>
        <begin position="135"/>
        <end position="164"/>
    </location>
</feature>
<feature type="transmembrane region" description="Helical" evidence="2">
    <location>
        <begin position="165"/>
        <end position="185"/>
    </location>
</feature>
<feature type="topological domain" description="Cytoplasmic" evidence="8">
    <location>
        <begin position="186"/>
        <end position="192"/>
    </location>
</feature>
<feature type="transmembrane region" description="Helical" evidence="2">
    <location>
        <begin position="193"/>
        <end position="213"/>
    </location>
</feature>
<feature type="topological domain" description="Extracellular" evidence="8">
    <location>
        <begin position="214"/>
        <end position="237"/>
    </location>
</feature>
<feature type="transmembrane region" description="Helical" evidence="2">
    <location>
        <begin position="238"/>
        <end position="258"/>
    </location>
</feature>
<feature type="topological domain" description="Cytoplasmic" evidence="4">
    <location>
        <begin position="259"/>
        <end position="500"/>
    </location>
</feature>
<feature type="region of interest" description="Disordered" evidence="3">
    <location>
        <begin position="411"/>
        <end position="500"/>
    </location>
</feature>
<feature type="compositionally biased region" description="Basic and acidic residues" evidence="3">
    <location>
        <begin position="428"/>
        <end position="444"/>
    </location>
</feature>
<feature type="compositionally biased region" description="Basic and acidic residues" evidence="3">
    <location>
        <begin position="466"/>
        <end position="485"/>
    </location>
</feature>
<feature type="mutagenesis site" description="Reduces lactate transport. Reduces sensitivity to MMV007839 inhibition." evidence="4">
    <original>G</original>
    <variation>S</variation>
    <location>
        <position position="93"/>
    </location>
</feature>
<name>FNT3_TOXGM</name>
<evidence type="ECO:0000250" key="1">
    <source>
        <dbReference type="UniProtKB" id="O77389"/>
    </source>
</evidence>
<evidence type="ECO:0000255" key="2"/>
<evidence type="ECO:0000256" key="3">
    <source>
        <dbReference type="SAM" id="MobiDB-lite"/>
    </source>
</evidence>
<evidence type="ECO:0000269" key="4">
    <source>
    </source>
</evidence>
<evidence type="ECO:0000269" key="5">
    <source>
    </source>
</evidence>
<evidence type="ECO:0000303" key="6">
    <source>
    </source>
</evidence>
<evidence type="ECO:0000303" key="7">
    <source>
    </source>
</evidence>
<evidence type="ECO:0000305" key="8"/>
<evidence type="ECO:0000312" key="9">
    <source>
        <dbReference type="EMBL" id="EPT29115.1"/>
    </source>
</evidence>
<evidence type="ECO:0000312" key="10">
    <source>
        <dbReference type="Proteomes" id="UP000001529"/>
    </source>
</evidence>